<name>NUOCD_PSYA2</name>
<keyword id="KW-0997">Cell inner membrane</keyword>
<keyword id="KW-1003">Cell membrane</keyword>
<keyword id="KW-0472">Membrane</keyword>
<keyword id="KW-0511">Multifunctional enzyme</keyword>
<keyword id="KW-0520">NAD</keyword>
<keyword id="KW-0874">Quinone</keyword>
<keyword id="KW-1185">Reference proteome</keyword>
<keyword id="KW-1278">Translocase</keyword>
<keyword id="KW-0813">Transport</keyword>
<keyword id="KW-0830">Ubiquinone</keyword>
<comment type="function">
    <text evidence="1">NDH-1 shuttles electrons from NADH, via FMN and iron-sulfur (Fe-S) centers, to quinones in the respiratory chain. The immediate electron acceptor for the enzyme in this species is believed to be ubiquinone. Couples the redox reaction to proton translocation (for every two electrons transferred, four hydrogen ions are translocated across the cytoplasmic membrane), and thus conserves the redox energy in a proton gradient.</text>
</comment>
<comment type="catalytic activity">
    <reaction evidence="1">
        <text>a quinone + NADH + 5 H(+)(in) = a quinol + NAD(+) + 4 H(+)(out)</text>
        <dbReference type="Rhea" id="RHEA:57888"/>
        <dbReference type="ChEBI" id="CHEBI:15378"/>
        <dbReference type="ChEBI" id="CHEBI:24646"/>
        <dbReference type="ChEBI" id="CHEBI:57540"/>
        <dbReference type="ChEBI" id="CHEBI:57945"/>
        <dbReference type="ChEBI" id="CHEBI:132124"/>
    </reaction>
</comment>
<comment type="subunit">
    <text evidence="1">NDH-1 is composed of 13 different subunits. Subunits NuoB, CD, E, F, and G constitute the peripheral sector of the complex.</text>
</comment>
<comment type="subcellular location">
    <subcellularLocation>
        <location evidence="1">Cell inner membrane</location>
        <topology evidence="1">Peripheral membrane protein</topology>
        <orientation evidence="1">Cytoplasmic side</orientation>
    </subcellularLocation>
</comment>
<comment type="similarity">
    <text evidence="1">In the N-terminal section; belongs to the complex I 30 kDa subunit family.</text>
</comment>
<comment type="similarity">
    <text evidence="1">In the C-terminal section; belongs to the complex I 49 kDa subunit family.</text>
</comment>
<reference key="1">
    <citation type="journal article" date="2010" name="Appl. Environ. Microbiol.">
        <title>The genome sequence of Psychrobacter arcticus 273-4, a psychroactive Siberian permafrost bacterium, reveals mechanisms for adaptation to low-temperature growth.</title>
        <authorList>
            <person name="Ayala-del-Rio H.L."/>
            <person name="Chain P.S."/>
            <person name="Grzymski J.J."/>
            <person name="Ponder M.A."/>
            <person name="Ivanova N."/>
            <person name="Bergholz P.W."/>
            <person name="Di Bartolo G."/>
            <person name="Hauser L."/>
            <person name="Land M."/>
            <person name="Bakermans C."/>
            <person name="Rodrigues D."/>
            <person name="Klappenbach J."/>
            <person name="Zarka D."/>
            <person name="Larimer F."/>
            <person name="Richardson P."/>
            <person name="Murray A."/>
            <person name="Thomashow M."/>
            <person name="Tiedje J.M."/>
        </authorList>
    </citation>
    <scope>NUCLEOTIDE SEQUENCE [LARGE SCALE GENOMIC DNA]</scope>
    <source>
        <strain>DSM 17307 / VKM B-2377 / 273-4</strain>
    </source>
</reference>
<proteinExistence type="inferred from homology"/>
<feature type="chain" id="PRO_0000358668" description="NADH-quinone oxidoreductase subunit C/D">
    <location>
        <begin position="1"/>
        <end position="591"/>
    </location>
</feature>
<feature type="region of interest" description="NADH dehydrogenase I subunit C" evidence="1">
    <location>
        <begin position="1"/>
        <end position="182"/>
    </location>
</feature>
<feature type="region of interest" description="NADH dehydrogenase I subunit D" evidence="1">
    <location>
        <begin position="206"/>
        <end position="591"/>
    </location>
</feature>
<accession>Q4FU62</accession>
<sequence length="591" mass="68041">MVTVVENIDPKIKPVPAVIKELEEKYAGKFVVQHTVDEIPTVWVARADLLDVLLFLRKLPKPYVMLFDLSAIDERLRQHRQGLPESDFTVFYHLMSLERNSDVRIKVALSEEDLNVPSATQIWPNANWYEREVWDMFGIVFTGHPHLTRILLPKYWEGHPLRKEYHARATEFTPYFLNTAKQQYEQENLRFVPEEWGMKRSGRDEDFMFLNIGPNHPSAHGAFRLVLQLDGEEVVDCIPDIGYHHRGAEKMAERQTWHSFIPYTDRIDYLGGVMNELPYIMSVEKLAGITIPPRAETIRVMMSEFFRITNNLLFVGTFIQDAGGMTPVFYMFTDRQKAYDVIEAVTGYRMHPAWFRIGGTAHDLPRGWQRLVREFLDWMPKRLDEYVKAALQNSVLKGRTQGVAQYNTKQALAWGVTGAGLRATGLDFDLRKARPYMGYENYDFEVPVGYNGDAYDRCMVKVEEMRQSLRIIRQCMDNMPQGPYKADHPLAVPPPKDRTLNDIETLINHFISVSWGPVMPAGECTTIVEATKGLNSYYITSDKATMSYRTRIRTPTFAHLQQMPSVINGSLVSDAIMYLASIDVVMADCDR</sequence>
<organism>
    <name type="scientific">Psychrobacter arcticus (strain DSM 17307 / VKM B-2377 / 273-4)</name>
    <dbReference type="NCBI Taxonomy" id="259536"/>
    <lineage>
        <taxon>Bacteria</taxon>
        <taxon>Pseudomonadati</taxon>
        <taxon>Pseudomonadota</taxon>
        <taxon>Gammaproteobacteria</taxon>
        <taxon>Moraxellales</taxon>
        <taxon>Moraxellaceae</taxon>
        <taxon>Psychrobacter</taxon>
    </lineage>
</organism>
<gene>
    <name evidence="1" type="primary">nuoC</name>
    <name evidence="1" type="synonym">nuoCD</name>
    <name evidence="1" type="synonym">nuoD</name>
    <name type="ordered locus">Psyc_0586</name>
</gene>
<protein>
    <recommendedName>
        <fullName evidence="1">NADH-quinone oxidoreductase subunit C/D</fullName>
        <ecNumber evidence="1">7.1.1.-</ecNumber>
    </recommendedName>
    <alternativeName>
        <fullName evidence="1">NADH dehydrogenase I subunit C/D</fullName>
    </alternativeName>
    <alternativeName>
        <fullName evidence="1">NDH-1 subunit C/D</fullName>
    </alternativeName>
</protein>
<evidence type="ECO:0000255" key="1">
    <source>
        <dbReference type="HAMAP-Rule" id="MF_01359"/>
    </source>
</evidence>
<dbReference type="EC" id="7.1.1.-" evidence="1"/>
<dbReference type="EMBL" id="CP000082">
    <property type="protein sequence ID" value="AAZ18446.1"/>
    <property type="molecule type" value="Genomic_DNA"/>
</dbReference>
<dbReference type="RefSeq" id="WP_011279875.1">
    <property type="nucleotide sequence ID" value="NC_007204.1"/>
</dbReference>
<dbReference type="SMR" id="Q4FU62"/>
<dbReference type="STRING" id="259536.Psyc_0586"/>
<dbReference type="KEGG" id="par:Psyc_0586"/>
<dbReference type="eggNOG" id="COG0649">
    <property type="taxonomic scope" value="Bacteria"/>
</dbReference>
<dbReference type="eggNOG" id="COG0852">
    <property type="taxonomic scope" value="Bacteria"/>
</dbReference>
<dbReference type="HOGENOM" id="CLU_015134_3_2_6"/>
<dbReference type="OrthoDB" id="9801496at2"/>
<dbReference type="Proteomes" id="UP000000546">
    <property type="component" value="Chromosome"/>
</dbReference>
<dbReference type="GO" id="GO:0030964">
    <property type="term" value="C:NADH dehydrogenase complex"/>
    <property type="evidence" value="ECO:0007669"/>
    <property type="project" value="InterPro"/>
</dbReference>
<dbReference type="GO" id="GO:0005886">
    <property type="term" value="C:plasma membrane"/>
    <property type="evidence" value="ECO:0007669"/>
    <property type="project" value="UniProtKB-SubCell"/>
</dbReference>
<dbReference type="GO" id="GO:0051287">
    <property type="term" value="F:NAD binding"/>
    <property type="evidence" value="ECO:0007669"/>
    <property type="project" value="InterPro"/>
</dbReference>
<dbReference type="GO" id="GO:0008137">
    <property type="term" value="F:NADH dehydrogenase (ubiquinone) activity"/>
    <property type="evidence" value="ECO:0007669"/>
    <property type="project" value="InterPro"/>
</dbReference>
<dbReference type="GO" id="GO:0050136">
    <property type="term" value="F:NADH:ubiquinone reductase (non-electrogenic) activity"/>
    <property type="evidence" value="ECO:0007669"/>
    <property type="project" value="UniProtKB-UniRule"/>
</dbReference>
<dbReference type="GO" id="GO:0048038">
    <property type="term" value="F:quinone binding"/>
    <property type="evidence" value="ECO:0007669"/>
    <property type="project" value="UniProtKB-KW"/>
</dbReference>
<dbReference type="FunFam" id="1.10.645.10:FF:000001">
    <property type="entry name" value="NADH-quinone oxidoreductase subunit C/D"/>
    <property type="match status" value="1"/>
</dbReference>
<dbReference type="Gene3D" id="1.10.645.10">
    <property type="entry name" value="Cytochrome-c3 Hydrogenase, chain B"/>
    <property type="match status" value="1"/>
</dbReference>
<dbReference type="Gene3D" id="3.30.460.80">
    <property type="entry name" value="NADH:ubiquinone oxidoreductase, 30kDa subunit"/>
    <property type="match status" value="1"/>
</dbReference>
<dbReference type="HAMAP" id="MF_01357">
    <property type="entry name" value="NDH1_NuoC"/>
    <property type="match status" value="1"/>
</dbReference>
<dbReference type="HAMAP" id="MF_01359">
    <property type="entry name" value="NDH1_NuoCD_1"/>
    <property type="match status" value="1"/>
</dbReference>
<dbReference type="HAMAP" id="MF_01358">
    <property type="entry name" value="NDH1_NuoD"/>
    <property type="match status" value="1"/>
</dbReference>
<dbReference type="InterPro" id="IPR010218">
    <property type="entry name" value="NADH_DH_suC"/>
</dbReference>
<dbReference type="InterPro" id="IPR023062">
    <property type="entry name" value="NADH_DH_suCD"/>
</dbReference>
<dbReference type="InterPro" id="IPR001135">
    <property type="entry name" value="NADH_Q_OxRdtase_suD"/>
</dbReference>
<dbReference type="InterPro" id="IPR037232">
    <property type="entry name" value="NADH_quin_OxRdtase_su_C/D-like"/>
</dbReference>
<dbReference type="InterPro" id="IPR001268">
    <property type="entry name" value="NADH_UbQ_OxRdtase_30kDa_su"/>
</dbReference>
<dbReference type="InterPro" id="IPR014029">
    <property type="entry name" value="NADH_UbQ_OxRdtase_49kDa_CS"/>
</dbReference>
<dbReference type="InterPro" id="IPR022885">
    <property type="entry name" value="NDH1_su_D/H"/>
</dbReference>
<dbReference type="InterPro" id="IPR029014">
    <property type="entry name" value="NiFe-Hase_large"/>
</dbReference>
<dbReference type="NCBIfam" id="TIGR01961">
    <property type="entry name" value="NuoC_fam"/>
    <property type="match status" value="1"/>
</dbReference>
<dbReference type="NCBIfam" id="TIGR01962">
    <property type="entry name" value="NuoD"/>
    <property type="match status" value="1"/>
</dbReference>
<dbReference type="NCBIfam" id="NF004739">
    <property type="entry name" value="PRK06075.1"/>
    <property type="match status" value="1"/>
</dbReference>
<dbReference type="NCBIfam" id="NF008728">
    <property type="entry name" value="PRK11742.1"/>
    <property type="match status" value="1"/>
</dbReference>
<dbReference type="PANTHER" id="PTHR11993:SF45">
    <property type="entry name" value="NADH-QUINONE OXIDOREDUCTASE SUBUNIT C_D"/>
    <property type="match status" value="1"/>
</dbReference>
<dbReference type="PANTHER" id="PTHR11993">
    <property type="entry name" value="NADH-UBIQUINONE OXIDOREDUCTASE 49 KDA SUBUNIT"/>
    <property type="match status" value="1"/>
</dbReference>
<dbReference type="Pfam" id="PF00329">
    <property type="entry name" value="Complex1_30kDa"/>
    <property type="match status" value="1"/>
</dbReference>
<dbReference type="Pfam" id="PF00346">
    <property type="entry name" value="Complex1_49kDa"/>
    <property type="match status" value="1"/>
</dbReference>
<dbReference type="SUPFAM" id="SSF56762">
    <property type="entry name" value="HydB/Nqo4-like"/>
    <property type="match status" value="1"/>
</dbReference>
<dbReference type="SUPFAM" id="SSF143243">
    <property type="entry name" value="Nqo5-like"/>
    <property type="match status" value="1"/>
</dbReference>
<dbReference type="PROSITE" id="PS00535">
    <property type="entry name" value="COMPLEX1_49K"/>
    <property type="match status" value="1"/>
</dbReference>